<organism>
    <name type="scientific">Salmonella typhimurium (strain LT2 / SGSC1412 / ATCC 700720)</name>
    <dbReference type="NCBI Taxonomy" id="99287"/>
    <lineage>
        <taxon>Bacteria</taxon>
        <taxon>Pseudomonadati</taxon>
        <taxon>Pseudomonadota</taxon>
        <taxon>Gammaproteobacteria</taxon>
        <taxon>Enterobacterales</taxon>
        <taxon>Enterobacteriaceae</taxon>
        <taxon>Salmonella</taxon>
    </lineage>
</organism>
<protein>
    <recommendedName>
        <fullName>Probable protein adenylyltransferase Fic</fullName>
        <ecNumber>2.7.7.108</ecNumber>
    </recommendedName>
    <alternativeName>
        <fullName>Cell filamentation protein Fic</fullName>
    </alternativeName>
</protein>
<comment type="function">
    <text evidence="1">Probable adenylyltransferase that mediates the addition of adenosine 5'-monophosphate (AMP) to specific residues of target proteins (By similarity). Involved in cell filamentation induced by cyclic AMP.</text>
</comment>
<comment type="function">
    <text>Involved in cell filamentation induced by cyclic AMP.</text>
</comment>
<comment type="catalytic activity">
    <reaction>
        <text>L-tyrosyl-[protein] + ATP = O-(5'-adenylyl)-L-tyrosyl-[protein] + diphosphate</text>
        <dbReference type="Rhea" id="RHEA:54288"/>
        <dbReference type="Rhea" id="RHEA-COMP:10136"/>
        <dbReference type="Rhea" id="RHEA-COMP:13846"/>
        <dbReference type="ChEBI" id="CHEBI:30616"/>
        <dbReference type="ChEBI" id="CHEBI:33019"/>
        <dbReference type="ChEBI" id="CHEBI:46858"/>
        <dbReference type="ChEBI" id="CHEBI:83624"/>
        <dbReference type="EC" id="2.7.7.108"/>
    </reaction>
</comment>
<comment type="catalytic activity">
    <reaction>
        <text>L-threonyl-[protein] + ATP = 3-O-(5'-adenylyl)-L-threonyl-[protein] + diphosphate</text>
        <dbReference type="Rhea" id="RHEA:54292"/>
        <dbReference type="Rhea" id="RHEA-COMP:11060"/>
        <dbReference type="Rhea" id="RHEA-COMP:13847"/>
        <dbReference type="ChEBI" id="CHEBI:30013"/>
        <dbReference type="ChEBI" id="CHEBI:30616"/>
        <dbReference type="ChEBI" id="CHEBI:33019"/>
        <dbReference type="ChEBI" id="CHEBI:138113"/>
        <dbReference type="EC" id="2.7.7.108"/>
    </reaction>
</comment>
<comment type="similarity">
    <text evidence="3">Belongs to the fic family.</text>
</comment>
<reference key="1">
    <citation type="journal article" date="1990" name="J. Bacteriol.">
        <title>Chromosomal organization and expression of Escherichia coli pabA.</title>
        <authorList>
            <person name="Tran P.V."/>
            <person name="Bannor T.A."/>
            <person name="Doktor S.Z."/>
            <person name="Nichols B.P."/>
        </authorList>
    </citation>
    <scope>NUCLEOTIDE SEQUENCE [GENOMIC DNA]</scope>
</reference>
<reference key="2">
    <citation type="journal article" date="2001" name="Nature">
        <title>Complete genome sequence of Salmonella enterica serovar Typhimurium LT2.</title>
        <authorList>
            <person name="McClelland M."/>
            <person name="Sanderson K.E."/>
            <person name="Spieth J."/>
            <person name="Clifton S.W."/>
            <person name="Latreille P."/>
            <person name="Courtney L."/>
            <person name="Porwollik S."/>
            <person name="Ali J."/>
            <person name="Dante M."/>
            <person name="Du F."/>
            <person name="Hou S."/>
            <person name="Layman D."/>
            <person name="Leonard S."/>
            <person name="Nguyen C."/>
            <person name="Scott K."/>
            <person name="Holmes A."/>
            <person name="Grewal N."/>
            <person name="Mulvaney E."/>
            <person name="Ryan E."/>
            <person name="Sun H."/>
            <person name="Florea L."/>
            <person name="Miller W."/>
            <person name="Stoneking T."/>
            <person name="Nhan M."/>
            <person name="Waterston R."/>
            <person name="Wilson R.K."/>
        </authorList>
    </citation>
    <scope>NUCLEOTIDE SEQUENCE [LARGE SCALE GENOMIC DNA]</scope>
    <source>
        <strain>LT2 / SGSC1412 / ATCC 700720</strain>
    </source>
</reference>
<gene>
    <name type="primary">fic</name>
    <name type="ordered locus">STM3470</name>
</gene>
<dbReference type="EC" id="2.7.7.108"/>
<dbReference type="EMBL" id="M32355">
    <property type="protein sequence ID" value="AAA27176.1"/>
    <property type="molecule type" value="Genomic_DNA"/>
</dbReference>
<dbReference type="EMBL" id="AE006468">
    <property type="protein sequence ID" value="AAL22332.1"/>
    <property type="molecule type" value="Genomic_DNA"/>
</dbReference>
<dbReference type="RefSeq" id="NP_462373.1">
    <property type="nucleotide sequence ID" value="NC_003197.2"/>
</dbReference>
<dbReference type="RefSeq" id="WP_001280671.1">
    <property type="nucleotide sequence ID" value="NC_003197.2"/>
</dbReference>
<dbReference type="SMR" id="P20751"/>
<dbReference type="STRING" id="99287.STM3470"/>
<dbReference type="PaxDb" id="99287-STM3470"/>
<dbReference type="GeneID" id="1254993"/>
<dbReference type="KEGG" id="stm:STM3470"/>
<dbReference type="PATRIC" id="fig|99287.12.peg.3667"/>
<dbReference type="HOGENOM" id="CLU_080158_0_5_6"/>
<dbReference type="OMA" id="DPYCYPG"/>
<dbReference type="PhylomeDB" id="P20751"/>
<dbReference type="BioCyc" id="SENT99287:STM3470-MONOMER"/>
<dbReference type="Proteomes" id="UP000001014">
    <property type="component" value="Chromosome"/>
</dbReference>
<dbReference type="GO" id="GO:0070733">
    <property type="term" value="F:AMPylase activity"/>
    <property type="evidence" value="ECO:0007669"/>
    <property type="project" value="RHEA"/>
</dbReference>
<dbReference type="GO" id="GO:0005524">
    <property type="term" value="F:ATP binding"/>
    <property type="evidence" value="ECO:0007669"/>
    <property type="project" value="UniProtKB-KW"/>
</dbReference>
<dbReference type="GO" id="GO:0051302">
    <property type="term" value="P:regulation of cell division"/>
    <property type="evidence" value="ECO:0000318"/>
    <property type="project" value="GO_Central"/>
</dbReference>
<dbReference type="Gene3D" id="1.10.3290.10">
    <property type="entry name" value="Fido-like domain"/>
    <property type="match status" value="1"/>
</dbReference>
<dbReference type="InterPro" id="IPR003812">
    <property type="entry name" value="Fido"/>
</dbReference>
<dbReference type="InterPro" id="IPR036597">
    <property type="entry name" value="Fido-like_dom_sf"/>
</dbReference>
<dbReference type="NCBIfam" id="NF007672">
    <property type="entry name" value="PRK10347.1"/>
    <property type="match status" value="1"/>
</dbReference>
<dbReference type="PANTHER" id="PTHR39560">
    <property type="entry name" value="PROTEIN ADENYLYLTRANSFERASE FIC-RELATED"/>
    <property type="match status" value="1"/>
</dbReference>
<dbReference type="PANTHER" id="PTHR39560:SF1">
    <property type="entry name" value="PROTEIN ADENYLYLTRANSFERASE FIC-RELATED"/>
    <property type="match status" value="1"/>
</dbReference>
<dbReference type="Pfam" id="PF02661">
    <property type="entry name" value="Fic"/>
    <property type="match status" value="1"/>
</dbReference>
<dbReference type="SUPFAM" id="SSF140931">
    <property type="entry name" value="Fic-like"/>
    <property type="match status" value="1"/>
</dbReference>
<dbReference type="PROSITE" id="PS51459">
    <property type="entry name" value="FIDO"/>
    <property type="match status" value="1"/>
</dbReference>
<sequence length="200" mass="22781">MSDKFGEGRDPYLYPGLNVMRNRLGIHQAQRLAQAAYEMTALRAATIELGPLVRGLPHLCAIHRQLYQDIFDWAGQLREVDIYQGDTRFCHFAYIEKEGNALMQDLEEEGYLVGLAHEKFVERLAHYYCEINVLHPFRFGSGLAQRIFFEQLALHAGYALSWQGIAVETWKQANQSGAMGDLSALRAIFQKAISEARETE</sequence>
<name>FIC_SALTY</name>
<proteinExistence type="inferred from homology"/>
<keyword id="KW-0067">ATP-binding</keyword>
<keyword id="KW-0547">Nucleotide-binding</keyword>
<keyword id="KW-0548">Nucleotidyltransferase</keyword>
<keyword id="KW-1185">Reference proteome</keyword>
<keyword id="KW-0808">Transferase</keyword>
<feature type="chain" id="PRO_0000087241" description="Probable protein adenylyltransferase Fic">
    <location>
        <begin position="1"/>
        <end position="200"/>
    </location>
</feature>
<feature type="domain" description="Fido" evidence="2">
    <location>
        <begin position="54"/>
        <end position="191"/>
    </location>
</feature>
<feature type="binding site" evidence="1">
    <location>
        <begin position="84"/>
        <end position="85"/>
    </location>
    <ligand>
        <name>ATP</name>
        <dbReference type="ChEBI" id="CHEBI:30616"/>
    </ligand>
</feature>
<feature type="binding site" evidence="1">
    <location>
        <begin position="140"/>
        <end position="142"/>
    </location>
    <ligand>
        <name>ATP</name>
        <dbReference type="ChEBI" id="CHEBI:30616"/>
    </ligand>
</feature>
<feature type="binding site" evidence="1">
    <location>
        <position position="146"/>
    </location>
    <ligand>
        <name>ATP</name>
        <dbReference type="ChEBI" id="CHEBI:30616"/>
    </ligand>
</feature>
<feature type="binding site" evidence="1">
    <location>
        <position position="172"/>
    </location>
    <ligand>
        <name>ATP</name>
        <dbReference type="ChEBI" id="CHEBI:30616"/>
    </ligand>
</feature>
<feature type="sequence conflict" description="In Ref. 1; AAA27176." evidence="3" ref="1">
    <original>R</original>
    <variation>P</variation>
    <location>
        <position position="88"/>
    </location>
</feature>
<evidence type="ECO:0000250" key="1"/>
<evidence type="ECO:0000255" key="2">
    <source>
        <dbReference type="PROSITE-ProRule" id="PRU00791"/>
    </source>
</evidence>
<evidence type="ECO:0000305" key="3"/>
<accession>P20751</accession>